<keyword id="KW-0414">Isoprene biosynthesis</keyword>
<keyword id="KW-0464">Manganese</keyword>
<keyword id="KW-0479">Metal-binding</keyword>
<keyword id="KW-0521">NADP</keyword>
<keyword id="KW-0560">Oxidoreductase</keyword>
<feature type="chain" id="PRO_1000020314" description="1-deoxy-D-xylulose 5-phosphate reductoisomerase">
    <location>
        <begin position="1"/>
        <end position="391"/>
    </location>
</feature>
<feature type="binding site" evidence="1">
    <location>
        <position position="17"/>
    </location>
    <ligand>
        <name>NADPH</name>
        <dbReference type="ChEBI" id="CHEBI:57783"/>
    </ligand>
</feature>
<feature type="binding site" evidence="1">
    <location>
        <position position="18"/>
    </location>
    <ligand>
        <name>NADPH</name>
        <dbReference type="ChEBI" id="CHEBI:57783"/>
    </ligand>
</feature>
<feature type="binding site" evidence="1">
    <location>
        <position position="19"/>
    </location>
    <ligand>
        <name>NADPH</name>
        <dbReference type="ChEBI" id="CHEBI:57783"/>
    </ligand>
</feature>
<feature type="binding site" evidence="1">
    <location>
        <position position="20"/>
    </location>
    <ligand>
        <name>NADPH</name>
        <dbReference type="ChEBI" id="CHEBI:57783"/>
    </ligand>
</feature>
<feature type="binding site" evidence="1">
    <location>
        <position position="47"/>
    </location>
    <ligand>
        <name>NADPH</name>
        <dbReference type="ChEBI" id="CHEBI:57783"/>
    </ligand>
</feature>
<feature type="binding site" evidence="1">
    <location>
        <position position="130"/>
    </location>
    <ligand>
        <name>NADPH</name>
        <dbReference type="ChEBI" id="CHEBI:57783"/>
    </ligand>
</feature>
<feature type="binding site" evidence="1">
    <location>
        <position position="131"/>
    </location>
    <ligand>
        <name>1-deoxy-D-xylulose 5-phosphate</name>
        <dbReference type="ChEBI" id="CHEBI:57792"/>
    </ligand>
</feature>
<feature type="binding site" evidence="1">
    <location>
        <position position="132"/>
    </location>
    <ligand>
        <name>NADPH</name>
        <dbReference type="ChEBI" id="CHEBI:57783"/>
    </ligand>
</feature>
<feature type="binding site" evidence="1">
    <location>
        <position position="156"/>
    </location>
    <ligand>
        <name>Mn(2+)</name>
        <dbReference type="ChEBI" id="CHEBI:29035"/>
    </ligand>
</feature>
<feature type="binding site" evidence="1">
    <location>
        <position position="157"/>
    </location>
    <ligand>
        <name>1-deoxy-D-xylulose 5-phosphate</name>
        <dbReference type="ChEBI" id="CHEBI:57792"/>
    </ligand>
</feature>
<feature type="binding site" evidence="1">
    <location>
        <position position="158"/>
    </location>
    <ligand>
        <name>1-deoxy-D-xylulose 5-phosphate</name>
        <dbReference type="ChEBI" id="CHEBI:57792"/>
    </ligand>
</feature>
<feature type="binding site" evidence="1">
    <location>
        <position position="158"/>
    </location>
    <ligand>
        <name>Mn(2+)</name>
        <dbReference type="ChEBI" id="CHEBI:29035"/>
    </ligand>
</feature>
<feature type="binding site" evidence="1">
    <location>
        <position position="182"/>
    </location>
    <ligand>
        <name>1-deoxy-D-xylulose 5-phosphate</name>
        <dbReference type="ChEBI" id="CHEBI:57792"/>
    </ligand>
</feature>
<feature type="binding site" evidence="1">
    <location>
        <position position="205"/>
    </location>
    <ligand>
        <name>1-deoxy-D-xylulose 5-phosphate</name>
        <dbReference type="ChEBI" id="CHEBI:57792"/>
    </ligand>
</feature>
<feature type="binding site" evidence="1">
    <location>
        <position position="211"/>
    </location>
    <ligand>
        <name>NADPH</name>
        <dbReference type="ChEBI" id="CHEBI:57783"/>
    </ligand>
</feature>
<feature type="binding site" evidence="1">
    <location>
        <position position="218"/>
    </location>
    <ligand>
        <name>1-deoxy-D-xylulose 5-phosphate</name>
        <dbReference type="ChEBI" id="CHEBI:57792"/>
    </ligand>
</feature>
<feature type="binding site" evidence="1">
    <location>
        <position position="223"/>
    </location>
    <ligand>
        <name>1-deoxy-D-xylulose 5-phosphate</name>
        <dbReference type="ChEBI" id="CHEBI:57792"/>
    </ligand>
</feature>
<feature type="binding site" evidence="1">
    <location>
        <position position="224"/>
    </location>
    <ligand>
        <name>1-deoxy-D-xylulose 5-phosphate</name>
        <dbReference type="ChEBI" id="CHEBI:57792"/>
    </ligand>
</feature>
<feature type="binding site" evidence="1">
    <location>
        <position position="227"/>
    </location>
    <ligand>
        <name>1-deoxy-D-xylulose 5-phosphate</name>
        <dbReference type="ChEBI" id="CHEBI:57792"/>
    </ligand>
</feature>
<feature type="binding site" evidence="1">
    <location>
        <position position="227"/>
    </location>
    <ligand>
        <name>Mn(2+)</name>
        <dbReference type="ChEBI" id="CHEBI:29035"/>
    </ligand>
</feature>
<organism>
    <name type="scientific">Sinorhizobium medicae (strain WSM419)</name>
    <name type="common">Ensifer medicae</name>
    <dbReference type="NCBI Taxonomy" id="366394"/>
    <lineage>
        <taxon>Bacteria</taxon>
        <taxon>Pseudomonadati</taxon>
        <taxon>Pseudomonadota</taxon>
        <taxon>Alphaproteobacteria</taxon>
        <taxon>Hyphomicrobiales</taxon>
        <taxon>Rhizobiaceae</taxon>
        <taxon>Sinorhizobium/Ensifer group</taxon>
        <taxon>Sinorhizobium</taxon>
    </lineage>
</organism>
<gene>
    <name evidence="1" type="primary">dxr</name>
    <name type="ordered locus">Smed_2879</name>
</gene>
<dbReference type="EC" id="1.1.1.267" evidence="1"/>
<dbReference type="EMBL" id="CP000738">
    <property type="protein sequence ID" value="ABR61709.1"/>
    <property type="molecule type" value="Genomic_DNA"/>
</dbReference>
<dbReference type="RefSeq" id="WP_012067092.1">
    <property type="nucleotide sequence ID" value="NC_009636.1"/>
</dbReference>
<dbReference type="RefSeq" id="YP_001328544.1">
    <property type="nucleotide sequence ID" value="NC_009636.1"/>
</dbReference>
<dbReference type="SMR" id="A6UDH9"/>
<dbReference type="STRING" id="366394.Smed_2879"/>
<dbReference type="GeneID" id="61614712"/>
<dbReference type="KEGG" id="smd:Smed_2879"/>
<dbReference type="PATRIC" id="fig|366394.8.peg.6092"/>
<dbReference type="eggNOG" id="COG0743">
    <property type="taxonomic scope" value="Bacteria"/>
</dbReference>
<dbReference type="HOGENOM" id="CLU_035714_4_0_5"/>
<dbReference type="OrthoDB" id="9806546at2"/>
<dbReference type="UniPathway" id="UPA00056">
    <property type="reaction ID" value="UER00092"/>
</dbReference>
<dbReference type="Proteomes" id="UP000001108">
    <property type="component" value="Chromosome"/>
</dbReference>
<dbReference type="GO" id="GO:0030604">
    <property type="term" value="F:1-deoxy-D-xylulose-5-phosphate reductoisomerase activity"/>
    <property type="evidence" value="ECO:0007669"/>
    <property type="project" value="UniProtKB-UniRule"/>
</dbReference>
<dbReference type="GO" id="GO:0030145">
    <property type="term" value="F:manganese ion binding"/>
    <property type="evidence" value="ECO:0007669"/>
    <property type="project" value="TreeGrafter"/>
</dbReference>
<dbReference type="GO" id="GO:0070402">
    <property type="term" value="F:NADPH binding"/>
    <property type="evidence" value="ECO:0007669"/>
    <property type="project" value="InterPro"/>
</dbReference>
<dbReference type="GO" id="GO:0051484">
    <property type="term" value="P:isopentenyl diphosphate biosynthetic process, methylerythritol 4-phosphate pathway involved in terpenoid biosynthetic process"/>
    <property type="evidence" value="ECO:0007669"/>
    <property type="project" value="TreeGrafter"/>
</dbReference>
<dbReference type="FunFam" id="3.40.50.720:FF:000045">
    <property type="entry name" value="1-deoxy-D-xylulose 5-phosphate reductoisomerase"/>
    <property type="match status" value="1"/>
</dbReference>
<dbReference type="Gene3D" id="1.10.1740.10">
    <property type="match status" value="1"/>
</dbReference>
<dbReference type="Gene3D" id="3.40.50.720">
    <property type="entry name" value="NAD(P)-binding Rossmann-like Domain"/>
    <property type="match status" value="1"/>
</dbReference>
<dbReference type="HAMAP" id="MF_00183">
    <property type="entry name" value="DXP_reductoisom"/>
    <property type="match status" value="1"/>
</dbReference>
<dbReference type="InterPro" id="IPR003821">
    <property type="entry name" value="DXP_reductoisomerase"/>
</dbReference>
<dbReference type="InterPro" id="IPR013644">
    <property type="entry name" value="DXP_reductoisomerase_C"/>
</dbReference>
<dbReference type="InterPro" id="IPR013512">
    <property type="entry name" value="DXP_reductoisomerase_N"/>
</dbReference>
<dbReference type="InterPro" id="IPR026877">
    <property type="entry name" value="DXPR_C"/>
</dbReference>
<dbReference type="InterPro" id="IPR036169">
    <property type="entry name" value="DXPR_C_sf"/>
</dbReference>
<dbReference type="InterPro" id="IPR036291">
    <property type="entry name" value="NAD(P)-bd_dom_sf"/>
</dbReference>
<dbReference type="NCBIfam" id="TIGR00243">
    <property type="entry name" value="Dxr"/>
    <property type="match status" value="1"/>
</dbReference>
<dbReference type="PANTHER" id="PTHR30525">
    <property type="entry name" value="1-DEOXY-D-XYLULOSE 5-PHOSPHATE REDUCTOISOMERASE"/>
    <property type="match status" value="1"/>
</dbReference>
<dbReference type="PANTHER" id="PTHR30525:SF0">
    <property type="entry name" value="1-DEOXY-D-XYLULOSE 5-PHOSPHATE REDUCTOISOMERASE, CHLOROPLASTIC"/>
    <property type="match status" value="1"/>
</dbReference>
<dbReference type="Pfam" id="PF08436">
    <property type="entry name" value="DXP_redisom_C"/>
    <property type="match status" value="1"/>
</dbReference>
<dbReference type="Pfam" id="PF02670">
    <property type="entry name" value="DXP_reductoisom"/>
    <property type="match status" value="1"/>
</dbReference>
<dbReference type="Pfam" id="PF13288">
    <property type="entry name" value="DXPR_C"/>
    <property type="match status" value="1"/>
</dbReference>
<dbReference type="PIRSF" id="PIRSF006205">
    <property type="entry name" value="Dxp_reductismrs"/>
    <property type="match status" value="1"/>
</dbReference>
<dbReference type="SUPFAM" id="SSF69055">
    <property type="entry name" value="1-deoxy-D-xylulose-5-phosphate reductoisomerase, C-terminal domain"/>
    <property type="match status" value="1"/>
</dbReference>
<dbReference type="SUPFAM" id="SSF55347">
    <property type="entry name" value="Glyceraldehyde-3-phosphate dehydrogenase-like, C-terminal domain"/>
    <property type="match status" value="1"/>
</dbReference>
<dbReference type="SUPFAM" id="SSF51735">
    <property type="entry name" value="NAD(P)-binding Rossmann-fold domains"/>
    <property type="match status" value="1"/>
</dbReference>
<accession>A6UDH9</accession>
<protein>
    <recommendedName>
        <fullName evidence="1">1-deoxy-D-xylulose 5-phosphate reductoisomerase</fullName>
        <shortName evidence="1">DXP reductoisomerase</shortName>
        <ecNumber evidence="1">1.1.1.267</ecNumber>
    </recommendedName>
    <alternativeName>
        <fullName evidence="1">1-deoxyxylulose-5-phosphate reductoisomerase</fullName>
    </alternativeName>
    <alternativeName>
        <fullName evidence="1">2-C-methyl-D-erythritol 4-phosphate synthase</fullName>
    </alternativeName>
</protein>
<proteinExistence type="inferred from homology"/>
<comment type="function">
    <text evidence="1">Catalyzes the NADPH-dependent rearrangement and reduction of 1-deoxy-D-xylulose-5-phosphate (DXP) to 2-C-methyl-D-erythritol 4-phosphate (MEP).</text>
</comment>
<comment type="catalytic activity">
    <reaction evidence="1">
        <text>2-C-methyl-D-erythritol 4-phosphate + NADP(+) = 1-deoxy-D-xylulose 5-phosphate + NADPH + H(+)</text>
        <dbReference type="Rhea" id="RHEA:13717"/>
        <dbReference type="ChEBI" id="CHEBI:15378"/>
        <dbReference type="ChEBI" id="CHEBI:57783"/>
        <dbReference type="ChEBI" id="CHEBI:57792"/>
        <dbReference type="ChEBI" id="CHEBI:58262"/>
        <dbReference type="ChEBI" id="CHEBI:58349"/>
        <dbReference type="EC" id="1.1.1.267"/>
    </reaction>
    <physiologicalReaction direction="right-to-left" evidence="1">
        <dbReference type="Rhea" id="RHEA:13719"/>
    </physiologicalReaction>
</comment>
<comment type="cofactor">
    <cofactor evidence="1">
        <name>Mg(2+)</name>
        <dbReference type="ChEBI" id="CHEBI:18420"/>
    </cofactor>
    <cofactor evidence="1">
        <name>Mn(2+)</name>
        <dbReference type="ChEBI" id="CHEBI:29035"/>
    </cofactor>
</comment>
<comment type="pathway">
    <text evidence="1">Isoprenoid biosynthesis; isopentenyl diphosphate biosynthesis via DXP pathway; isopentenyl diphosphate from 1-deoxy-D-xylulose 5-phosphate: step 1/6.</text>
</comment>
<comment type="similarity">
    <text evidence="1">Belongs to the DXR family.</text>
</comment>
<sequence length="391" mass="41401">MASGDELKRRLTILGSTGSIGTSTLDVIERLGGRDRFEVAALTGNGNIPLLAAQARRMGAELAVTADGDRYGELKDALSGSGIEVAAGRTGLSEAAERDAGWVMAAIVGNAGLGPTLAAARRGADIALANKECLVSAGSLFIDAVAEGGGRLLPVDSEHNAIFQVLENDQRHAVERIVLTASGGPFRTKSLDEMQHVTAEAARAHPNWSMGLKISIDSASMFNKALEMIEARHLFNLRPDQIEVIVHPQSVVHSMVGYADGSVLAQLGCPDMRTAIGYALSYPRRCDLPVERLDFARLARLDFEAPDEVRFPALRLARRAMEEGGLQGAVLNGAKETALGAFIEGRVGFLDMAEIVEEVMNDLAGLPAATSMDDVFAADEQARQAAAGMIP</sequence>
<reference key="1">
    <citation type="submission" date="2007-06" db="EMBL/GenBank/DDBJ databases">
        <title>Complete sequence of Sinorhizobium medicae WSM419 chromosome.</title>
        <authorList>
            <consortium name="US DOE Joint Genome Institute"/>
            <person name="Copeland A."/>
            <person name="Lucas S."/>
            <person name="Lapidus A."/>
            <person name="Barry K."/>
            <person name="Glavina del Rio T."/>
            <person name="Dalin E."/>
            <person name="Tice H."/>
            <person name="Pitluck S."/>
            <person name="Chain P."/>
            <person name="Malfatti S."/>
            <person name="Shin M."/>
            <person name="Vergez L."/>
            <person name="Schmutz J."/>
            <person name="Larimer F."/>
            <person name="Land M."/>
            <person name="Hauser L."/>
            <person name="Kyrpides N."/>
            <person name="Mikhailova N."/>
            <person name="Reeve W.G."/>
            <person name="Richardson P."/>
        </authorList>
    </citation>
    <scope>NUCLEOTIDE SEQUENCE [LARGE SCALE GENOMIC DNA]</scope>
    <source>
        <strain>WSM419</strain>
    </source>
</reference>
<name>DXR_SINMW</name>
<evidence type="ECO:0000255" key="1">
    <source>
        <dbReference type="HAMAP-Rule" id="MF_00183"/>
    </source>
</evidence>